<reference key="1">
    <citation type="journal article" date="2005" name="Nature">
        <title>Sequencing of Aspergillus nidulans and comparative analysis with A. fumigatus and A. oryzae.</title>
        <authorList>
            <person name="Galagan J.E."/>
            <person name="Calvo S.E."/>
            <person name="Cuomo C."/>
            <person name="Ma L.-J."/>
            <person name="Wortman J.R."/>
            <person name="Batzoglou S."/>
            <person name="Lee S.-I."/>
            <person name="Bastuerkmen M."/>
            <person name="Spevak C.C."/>
            <person name="Clutterbuck J."/>
            <person name="Kapitonov V."/>
            <person name="Jurka J."/>
            <person name="Scazzocchio C."/>
            <person name="Farman M.L."/>
            <person name="Butler J."/>
            <person name="Purcell S."/>
            <person name="Harris S."/>
            <person name="Braus G.H."/>
            <person name="Draht O."/>
            <person name="Busch S."/>
            <person name="D'Enfert C."/>
            <person name="Bouchier C."/>
            <person name="Goldman G.H."/>
            <person name="Bell-Pedersen D."/>
            <person name="Griffiths-Jones S."/>
            <person name="Doonan J.H."/>
            <person name="Yu J."/>
            <person name="Vienken K."/>
            <person name="Pain A."/>
            <person name="Freitag M."/>
            <person name="Selker E.U."/>
            <person name="Archer D.B."/>
            <person name="Penalva M.A."/>
            <person name="Oakley B.R."/>
            <person name="Momany M."/>
            <person name="Tanaka T."/>
            <person name="Kumagai T."/>
            <person name="Asai K."/>
            <person name="Machida M."/>
            <person name="Nierman W.C."/>
            <person name="Denning D.W."/>
            <person name="Caddick M.X."/>
            <person name="Hynes M."/>
            <person name="Paoletti M."/>
            <person name="Fischer R."/>
            <person name="Miller B.L."/>
            <person name="Dyer P.S."/>
            <person name="Sachs M.S."/>
            <person name="Osmani S.A."/>
            <person name="Birren B.W."/>
        </authorList>
    </citation>
    <scope>NUCLEOTIDE SEQUENCE [LARGE SCALE GENOMIC DNA]</scope>
    <source>
        <strain>FGSC A4 / ATCC 38163 / CBS 112.46 / NRRL 194 / M139</strain>
    </source>
</reference>
<reference key="2">
    <citation type="journal article" date="2009" name="Fungal Genet. Biol.">
        <title>The 2008 update of the Aspergillus nidulans genome annotation: a community effort.</title>
        <authorList>
            <person name="Wortman J.R."/>
            <person name="Gilsenan J.M."/>
            <person name="Joardar V."/>
            <person name="Deegan J."/>
            <person name="Clutterbuck J."/>
            <person name="Andersen M.R."/>
            <person name="Archer D."/>
            <person name="Bencina M."/>
            <person name="Braus G."/>
            <person name="Coutinho P."/>
            <person name="von Dohren H."/>
            <person name="Doonan J."/>
            <person name="Driessen A.J."/>
            <person name="Durek P."/>
            <person name="Espeso E."/>
            <person name="Fekete E."/>
            <person name="Flipphi M."/>
            <person name="Estrada C.G."/>
            <person name="Geysens S."/>
            <person name="Goldman G."/>
            <person name="de Groot P.W."/>
            <person name="Hansen K."/>
            <person name="Harris S.D."/>
            <person name="Heinekamp T."/>
            <person name="Helmstaedt K."/>
            <person name="Henrissat B."/>
            <person name="Hofmann G."/>
            <person name="Homan T."/>
            <person name="Horio T."/>
            <person name="Horiuchi H."/>
            <person name="James S."/>
            <person name="Jones M."/>
            <person name="Karaffa L."/>
            <person name="Karanyi Z."/>
            <person name="Kato M."/>
            <person name="Keller N."/>
            <person name="Kelly D.E."/>
            <person name="Kiel J.A."/>
            <person name="Kim J.M."/>
            <person name="van der Klei I.J."/>
            <person name="Klis F.M."/>
            <person name="Kovalchuk A."/>
            <person name="Krasevec N."/>
            <person name="Kubicek C.P."/>
            <person name="Liu B."/>
            <person name="Maccabe A."/>
            <person name="Meyer V."/>
            <person name="Mirabito P."/>
            <person name="Miskei M."/>
            <person name="Mos M."/>
            <person name="Mullins J."/>
            <person name="Nelson D.R."/>
            <person name="Nielsen J."/>
            <person name="Oakley B.R."/>
            <person name="Osmani S.A."/>
            <person name="Pakula T."/>
            <person name="Paszewski A."/>
            <person name="Paulsen I."/>
            <person name="Pilsyk S."/>
            <person name="Pocsi I."/>
            <person name="Punt P.J."/>
            <person name="Ram A.F."/>
            <person name="Ren Q."/>
            <person name="Robellet X."/>
            <person name="Robson G."/>
            <person name="Seiboth B."/>
            <person name="van Solingen P."/>
            <person name="Specht T."/>
            <person name="Sun J."/>
            <person name="Taheri-Talesh N."/>
            <person name="Takeshita N."/>
            <person name="Ussery D."/>
            <person name="vanKuyk P.A."/>
            <person name="Visser H."/>
            <person name="van de Vondervoort P.J."/>
            <person name="de Vries R.P."/>
            <person name="Walton J."/>
            <person name="Xiang X."/>
            <person name="Xiong Y."/>
            <person name="Zeng A.P."/>
            <person name="Brandt B.W."/>
            <person name="Cornell M.J."/>
            <person name="van den Hondel C.A."/>
            <person name="Visser J."/>
            <person name="Oliver S.G."/>
            <person name="Turner G."/>
        </authorList>
    </citation>
    <scope>GENOME REANNOTATION</scope>
    <source>
        <strain>FGSC A4 / ATCC 38163 / CBS 112.46 / NRRL 194 / M139</strain>
    </source>
</reference>
<reference key="3">
    <citation type="journal article" date="2011" name="Appl. Microbiol. Biotechnol.">
        <title>Regulation of pentose utilisation by AraR, but not XlnR, differs in Aspergillus nidulans and Aspergillus niger.</title>
        <authorList>
            <person name="Battaglia E."/>
            <person name="Hansen S.F."/>
            <person name="Leendertse A."/>
            <person name="Madrid S."/>
            <person name="Mulder H."/>
            <person name="Nikolaev I."/>
            <person name="de Vries R.P."/>
        </authorList>
    </citation>
    <scope>FUNCTION</scope>
    <scope>DISRUPTION PHENOTYPE</scope>
</reference>
<name>ARAR_EMENI</name>
<accession>Q5BGE2</accession>
<accession>C8VTP5</accession>
<proteinExistence type="inferred from homology"/>
<protein>
    <recommendedName>
        <fullName>Arabinolytic transcriptional activator araR</fullName>
    </recommendedName>
</protein>
<sequence length="825" mass="91031">MASSHQGNGTVPNSQTDAPPDSSTKRRWRRNRIACDSCHARRVRCDRQFPCSRCLRSEITCEFTRERRKRGRIARSKLAEMAKNKMETSETPAPAKTMNGIPAPAGTEIPGHVSPASTFHHRSPPANAPTVSAPSVDGRRSQTDPQLPVRRPEIGGNVTEEWLAGTHVSPGSYEFLNGPAFGEGLGPFPHMFDVWNGVDLAAYSAGTSQGSKATNAPSTSTAPLKYPVLQPLMPFVEATLPRKLVFDLLDLYFTSAFSTHMHPVSFLSKDAPRPSSPALLSSMLWVAALDDRAFSLPISPPQRKRICQFLCALTIRLLRPLIHVSFKDQGGAAAAVAAAAAAATNNPAFAGVGQDLPPTTVHHPFEGGGDDRGLVGPAGSLDDVITYIHVASIISSSEQKAASMRWWHAAFTLARELKLNQEIEVMPNGDSQVEGSSPPFGYSLPGWDGADPGPVFNYSNPTRSSLNCVCDRQDQNTITEEHREERRRTWWLLYIMDRHLALCYNRPLALLDAESEDLLLPLDEASWQSGIIHSNSPKSDGPQCLLSADKNKRRLFPNFICHDHSVFGFFLPLMTITGELIDLNQARNHPMLGMRLNGKDAWNVHVSEVLRQLEIYKASLTTFAATTSDPEAPLSAYAHAQSEHLPAEPSLSQAYAWHTQTVISYASYLVHVLHILLVGKWDPVSLIEDKDFWTSSPAFASTISHALDAADSVDQILRYDPDISFMPYFFGIQLLQGSFLLLLIVERLQKEAGEGILNACEVMIRATESCVVTLNTEYQRNFRQVMRSAVAQARGRPVNHSEIRHRRKAVLALYRWTRKGTGLAL</sequence>
<evidence type="ECO:0000255" key="1">
    <source>
        <dbReference type="PROSITE-ProRule" id="PRU00227"/>
    </source>
</evidence>
<evidence type="ECO:0000256" key="2">
    <source>
        <dbReference type="SAM" id="MobiDB-lite"/>
    </source>
</evidence>
<evidence type="ECO:0000269" key="3">
    <source>
    </source>
</evidence>
<evidence type="ECO:0000305" key="4"/>
<gene>
    <name type="ORF">AN0388</name>
    <name type="ORF">ANIA_00388</name>
</gene>
<organism>
    <name type="scientific">Emericella nidulans (strain FGSC A4 / ATCC 38163 / CBS 112.46 / NRRL 194 / M139)</name>
    <name type="common">Aspergillus nidulans</name>
    <dbReference type="NCBI Taxonomy" id="227321"/>
    <lineage>
        <taxon>Eukaryota</taxon>
        <taxon>Fungi</taxon>
        <taxon>Dikarya</taxon>
        <taxon>Ascomycota</taxon>
        <taxon>Pezizomycotina</taxon>
        <taxon>Eurotiomycetes</taxon>
        <taxon>Eurotiomycetidae</taxon>
        <taxon>Eurotiales</taxon>
        <taxon>Aspergillaceae</taxon>
        <taxon>Aspergillus</taxon>
        <taxon>Aspergillus subgen. Nidulantes</taxon>
    </lineage>
</organism>
<dbReference type="EMBL" id="AACD01000007">
    <property type="protein sequence ID" value="EAA66487.1"/>
    <property type="molecule type" value="Genomic_DNA"/>
</dbReference>
<dbReference type="EMBL" id="BN001308">
    <property type="protein sequence ID" value="CBF89583.1"/>
    <property type="molecule type" value="Genomic_DNA"/>
</dbReference>
<dbReference type="RefSeq" id="XP_657992.1">
    <property type="nucleotide sequence ID" value="XM_652900.1"/>
</dbReference>
<dbReference type="STRING" id="227321.Q5BGE2"/>
<dbReference type="EnsemblFungi" id="CBF89583">
    <property type="protein sequence ID" value="CBF89583"/>
    <property type="gene ID" value="ANIA_00388"/>
</dbReference>
<dbReference type="GeneID" id="2876164"/>
<dbReference type="KEGG" id="ani:ANIA_00388"/>
<dbReference type="VEuPathDB" id="FungiDB:AN0388"/>
<dbReference type="eggNOG" id="ENOG502QUI0">
    <property type="taxonomic scope" value="Eukaryota"/>
</dbReference>
<dbReference type="HOGENOM" id="CLU_006123_1_0_1"/>
<dbReference type="InParanoid" id="Q5BGE2"/>
<dbReference type="OMA" id="CHDHSIF"/>
<dbReference type="OrthoDB" id="435881at2759"/>
<dbReference type="Proteomes" id="UP000000560">
    <property type="component" value="Chromosome VIII"/>
</dbReference>
<dbReference type="GO" id="GO:0005634">
    <property type="term" value="C:nucleus"/>
    <property type="evidence" value="ECO:0007669"/>
    <property type="project" value="UniProtKB-SubCell"/>
</dbReference>
<dbReference type="GO" id="GO:0003677">
    <property type="term" value="F:DNA binding"/>
    <property type="evidence" value="ECO:0007669"/>
    <property type="project" value="UniProtKB-KW"/>
</dbReference>
<dbReference type="GO" id="GO:0000981">
    <property type="term" value="F:DNA-binding transcription factor activity, RNA polymerase II-specific"/>
    <property type="evidence" value="ECO:0007669"/>
    <property type="project" value="InterPro"/>
</dbReference>
<dbReference type="GO" id="GO:0008270">
    <property type="term" value="F:zinc ion binding"/>
    <property type="evidence" value="ECO:0007669"/>
    <property type="project" value="InterPro"/>
</dbReference>
<dbReference type="GO" id="GO:0019568">
    <property type="term" value="P:arabinose catabolic process"/>
    <property type="evidence" value="ECO:0000315"/>
    <property type="project" value="AspGD"/>
</dbReference>
<dbReference type="GO" id="GO:0006351">
    <property type="term" value="P:DNA-templated transcription"/>
    <property type="evidence" value="ECO:0007669"/>
    <property type="project" value="InterPro"/>
</dbReference>
<dbReference type="GO" id="GO:0043609">
    <property type="term" value="P:regulation of carbon utilization"/>
    <property type="evidence" value="ECO:0000315"/>
    <property type="project" value="AspGD"/>
</dbReference>
<dbReference type="CDD" id="cd12148">
    <property type="entry name" value="fungal_TF_MHR"/>
    <property type="match status" value="1"/>
</dbReference>
<dbReference type="CDD" id="cd00067">
    <property type="entry name" value="GAL4"/>
    <property type="match status" value="1"/>
</dbReference>
<dbReference type="FunFam" id="4.10.240.10:FF:000031">
    <property type="entry name" value="C6 transcription factor, putative"/>
    <property type="match status" value="1"/>
</dbReference>
<dbReference type="Gene3D" id="4.10.240.10">
    <property type="entry name" value="Zn(2)-C6 fungal-type DNA-binding domain"/>
    <property type="match status" value="1"/>
</dbReference>
<dbReference type="InterPro" id="IPR007219">
    <property type="entry name" value="Transcription_factor_dom_fun"/>
</dbReference>
<dbReference type="InterPro" id="IPR051439">
    <property type="entry name" value="XlnR/Xlr1"/>
</dbReference>
<dbReference type="InterPro" id="IPR036864">
    <property type="entry name" value="Zn2-C6_fun-type_DNA-bd_sf"/>
</dbReference>
<dbReference type="InterPro" id="IPR001138">
    <property type="entry name" value="Zn2Cys6_DnaBD"/>
</dbReference>
<dbReference type="PANTHER" id="PTHR47663:SF2">
    <property type="entry name" value="ARABINOLYTIC TRANSCRIPTIONAL ACTIVATOR ARAR-RELATED"/>
    <property type="match status" value="1"/>
</dbReference>
<dbReference type="PANTHER" id="PTHR47663">
    <property type="entry name" value="XYLANOLYTIC TRANSCRIPTIONAL ACTIVATOR XLNR-RELATED"/>
    <property type="match status" value="1"/>
</dbReference>
<dbReference type="Pfam" id="PF04082">
    <property type="entry name" value="Fungal_trans"/>
    <property type="match status" value="1"/>
</dbReference>
<dbReference type="Pfam" id="PF00172">
    <property type="entry name" value="Zn_clus"/>
    <property type="match status" value="1"/>
</dbReference>
<dbReference type="SMART" id="SM00906">
    <property type="entry name" value="Fungal_trans"/>
    <property type="match status" value="1"/>
</dbReference>
<dbReference type="SMART" id="SM00066">
    <property type="entry name" value="GAL4"/>
    <property type="match status" value="1"/>
</dbReference>
<dbReference type="SUPFAM" id="SSF57701">
    <property type="entry name" value="Zn2/Cys6 DNA-binding domain"/>
    <property type="match status" value="1"/>
</dbReference>
<dbReference type="PROSITE" id="PS00463">
    <property type="entry name" value="ZN2_CY6_FUNGAL_1"/>
    <property type="match status" value="1"/>
</dbReference>
<dbReference type="PROSITE" id="PS50048">
    <property type="entry name" value="ZN2_CY6_FUNGAL_2"/>
    <property type="match status" value="1"/>
</dbReference>
<keyword id="KW-0238">DNA-binding</keyword>
<keyword id="KW-0479">Metal-binding</keyword>
<keyword id="KW-0539">Nucleus</keyword>
<keyword id="KW-1185">Reference proteome</keyword>
<keyword id="KW-0804">Transcription</keyword>
<keyword id="KW-0805">Transcription regulation</keyword>
<keyword id="KW-0862">Zinc</keyword>
<comment type="function">
    <text evidence="3">Transcriptional activator of the arabinanolytic system. Involved in the regulation of extracellular arabinanolytic genes and in the regulation of the intracellular activities of L-arabinose catabolic genes in the pentose catabolic pathway (PCP) in response to the presence of L-arabinose.</text>
</comment>
<comment type="subcellular location">
    <subcellularLocation>
        <location evidence="1">Nucleus</location>
    </subcellularLocation>
</comment>
<comment type="disruption phenotype">
    <text evidence="3">Impairs growth on L-arabinose, but only a small growth reduction on L-arabitol.</text>
</comment>
<comment type="similarity">
    <text evidence="4">Belongs to the xlnR/xlr1 family. araR subfamily.</text>
</comment>
<feature type="chain" id="PRO_0000425612" description="Arabinolytic transcriptional activator araR">
    <location>
        <begin position="1"/>
        <end position="825"/>
    </location>
</feature>
<feature type="DNA-binding region" description="Zn(2)-C6 fungal-type" evidence="1">
    <location>
        <begin position="35"/>
        <end position="61"/>
    </location>
</feature>
<feature type="region of interest" description="Disordered" evidence="2">
    <location>
        <begin position="1"/>
        <end position="28"/>
    </location>
</feature>
<feature type="region of interest" description="Disordered" evidence="2">
    <location>
        <begin position="117"/>
        <end position="152"/>
    </location>
</feature>
<feature type="compositionally biased region" description="Polar residues" evidence="2">
    <location>
        <begin position="1"/>
        <end position="17"/>
    </location>
</feature>